<accession>Q63617</accession>
<keyword id="KW-0007">Acetylation</keyword>
<keyword id="KW-0067">ATP-binding</keyword>
<keyword id="KW-0143">Chaperone</keyword>
<keyword id="KW-0903">Direct protein sequencing</keyword>
<keyword id="KW-0256">Endoplasmic reticulum</keyword>
<keyword id="KW-0325">Glycoprotein</keyword>
<keyword id="KW-0547">Nucleotide-binding</keyword>
<keyword id="KW-0597">Phosphoprotein</keyword>
<keyword id="KW-1185">Reference proteome</keyword>
<keyword id="KW-0732">Signal</keyword>
<comment type="function">
    <text evidence="1 2">Has a pivotal role in cytoprotective cellular mechanisms triggered by oxygen deprivation. Promotes HSPA5/BiP-mediated ATP nucleotide exchange and thereby activates the unfolded protein response (UPR) pathway in the presence of endoplasmic reticulum stress (By similarity). May play a role as a molecular chaperone and participate in protein folding (By similarity).</text>
</comment>
<comment type="subunit">
    <text>Part of a large chaperone multiprotein complex comprising DNAJB11, HSP90B1, HSPA5, HYOU, PDIA2, PDIA4, PDIA6, PPIB, SDF2L1, UGGT1 and very small amounts of ERP29, but not, or at very low levels, CALR nor CANX.</text>
</comment>
<comment type="subcellular location">
    <subcellularLocation>
        <location>Endoplasmic reticulum lumen</location>
    </subcellularLocation>
</comment>
<comment type="tissue specificity">
    <text>Selectively expressed by cultured astrocytes but not endothelial cells, microglia or neurons.</text>
</comment>
<comment type="induction">
    <text>By oxygen deprivation.</text>
</comment>
<comment type="similarity">
    <text evidence="8">Belongs to the heat shock protein 70 family.</text>
</comment>
<feature type="signal peptide" evidence="6 7">
    <location>
        <begin position="1"/>
        <end position="32"/>
    </location>
</feature>
<feature type="chain" id="PRO_0000013539" description="Hypoxia up-regulated protein 1">
    <location>
        <begin position="33"/>
        <end position="999"/>
    </location>
</feature>
<feature type="region of interest" description="Disordered" evidence="5">
    <location>
        <begin position="564"/>
        <end position="694"/>
    </location>
</feature>
<feature type="region of interest" description="Disordered" evidence="5">
    <location>
        <begin position="909"/>
        <end position="999"/>
    </location>
</feature>
<feature type="short sequence motif" description="Prevents secretion from ER" evidence="4">
    <location>
        <begin position="996"/>
        <end position="999"/>
    </location>
</feature>
<feature type="compositionally biased region" description="Polar residues" evidence="5">
    <location>
        <begin position="574"/>
        <end position="583"/>
    </location>
</feature>
<feature type="compositionally biased region" description="Basic and acidic residues" evidence="5">
    <location>
        <begin position="611"/>
        <end position="626"/>
    </location>
</feature>
<feature type="compositionally biased region" description="Basic and acidic residues" evidence="5">
    <location>
        <begin position="641"/>
        <end position="668"/>
    </location>
</feature>
<feature type="compositionally biased region" description="Basic and acidic residues" evidence="5">
    <location>
        <begin position="949"/>
        <end position="962"/>
    </location>
</feature>
<feature type="modified residue" description="Phosphoserine" evidence="3">
    <location>
        <position position="567"/>
    </location>
</feature>
<feature type="modified residue" description="N6-acetyllysine" evidence="2">
    <location>
        <position position="883"/>
    </location>
</feature>
<feature type="glycosylation site" description="N-linked (GlcNAc...) asparagine" evidence="4">
    <location>
        <position position="155"/>
    </location>
</feature>
<feature type="glycosylation site" description="N-linked (GlcNAc...) asparagine" evidence="4">
    <location>
        <position position="222"/>
    </location>
</feature>
<feature type="glycosylation site" description="N-linked (GlcNAc...) asparagine" evidence="9">
    <location>
        <position position="515"/>
    </location>
</feature>
<feature type="glycosylation site" description="N-linked (GlcNAc...) asparagine" evidence="4">
    <location>
        <position position="596"/>
    </location>
</feature>
<feature type="glycosylation site" description="N-linked (GlcNAc...) asparagine" evidence="9">
    <location>
        <position position="830"/>
    </location>
</feature>
<feature type="glycosylation site" description="N-linked (GlcNAc...) asparagine" evidence="9">
    <location>
        <position position="862"/>
    </location>
</feature>
<feature type="glycosylation site" description="N-linked (GlcNAc...) asparagine" evidence="9">
    <location>
        <position position="869"/>
    </location>
</feature>
<feature type="glycosylation site" description="N-linked (GlcNAc...) asparagine" evidence="4">
    <location>
        <position position="922"/>
    </location>
</feature>
<feature type="glycosylation site" description="N-linked (GlcNAc...) asparagine" evidence="9">
    <location>
        <position position="931"/>
    </location>
</feature>
<organism>
    <name type="scientific">Rattus norvegicus</name>
    <name type="common">Rat</name>
    <dbReference type="NCBI Taxonomy" id="10116"/>
    <lineage>
        <taxon>Eukaryota</taxon>
        <taxon>Metazoa</taxon>
        <taxon>Chordata</taxon>
        <taxon>Craniata</taxon>
        <taxon>Vertebrata</taxon>
        <taxon>Euteleostomi</taxon>
        <taxon>Mammalia</taxon>
        <taxon>Eutheria</taxon>
        <taxon>Euarchontoglires</taxon>
        <taxon>Glires</taxon>
        <taxon>Rodentia</taxon>
        <taxon>Myomorpha</taxon>
        <taxon>Muroidea</taxon>
        <taxon>Muridae</taxon>
        <taxon>Murinae</taxon>
        <taxon>Rattus</taxon>
    </lineage>
</organism>
<dbReference type="EMBL" id="U41853">
    <property type="protein sequence ID" value="AAB05672.1"/>
    <property type="molecule type" value="mRNA"/>
</dbReference>
<dbReference type="RefSeq" id="NP_620222.2">
    <property type="nucleotide sequence ID" value="NM_138867.2"/>
</dbReference>
<dbReference type="SMR" id="Q63617"/>
<dbReference type="BioGRID" id="251367">
    <property type="interactions" value="9"/>
</dbReference>
<dbReference type="FunCoup" id="Q63617">
    <property type="interactions" value="3352"/>
</dbReference>
<dbReference type="IntAct" id="Q63617">
    <property type="interactions" value="4"/>
</dbReference>
<dbReference type="MINT" id="Q63617"/>
<dbReference type="STRING" id="10116.ENSRNOP00000039172"/>
<dbReference type="GlyCosmos" id="Q63617">
    <property type="glycosylation" value="9 sites, 7 glycans"/>
</dbReference>
<dbReference type="GlyGen" id="Q63617">
    <property type="glycosylation" value="9 sites, 7 N-linked glycans (5 sites)"/>
</dbReference>
<dbReference type="iPTMnet" id="Q63617"/>
<dbReference type="PhosphoSitePlus" id="Q63617"/>
<dbReference type="jPOST" id="Q63617"/>
<dbReference type="PaxDb" id="10116-ENSRNOP00000039172"/>
<dbReference type="GeneID" id="192235"/>
<dbReference type="KEGG" id="rno:192235"/>
<dbReference type="UCSC" id="RGD:621146">
    <property type="organism name" value="rat"/>
</dbReference>
<dbReference type="AGR" id="RGD:621146"/>
<dbReference type="CTD" id="10525"/>
<dbReference type="RGD" id="621146">
    <property type="gene designation" value="Hyou1"/>
</dbReference>
<dbReference type="eggNOG" id="KOG0104">
    <property type="taxonomic scope" value="Eukaryota"/>
</dbReference>
<dbReference type="InParanoid" id="Q63617"/>
<dbReference type="PhylomeDB" id="Q63617"/>
<dbReference type="PRO" id="PR:Q63617"/>
<dbReference type="Proteomes" id="UP000002494">
    <property type="component" value="Unplaced"/>
</dbReference>
<dbReference type="GO" id="GO:0005783">
    <property type="term" value="C:endoplasmic reticulum"/>
    <property type="evidence" value="ECO:0000266"/>
    <property type="project" value="RGD"/>
</dbReference>
<dbReference type="GO" id="GO:0034663">
    <property type="term" value="C:endoplasmic reticulum chaperone complex"/>
    <property type="evidence" value="ECO:0000266"/>
    <property type="project" value="RGD"/>
</dbReference>
<dbReference type="GO" id="GO:0005788">
    <property type="term" value="C:endoplasmic reticulum lumen"/>
    <property type="evidence" value="ECO:0007669"/>
    <property type="project" value="UniProtKB-SubCell"/>
</dbReference>
<dbReference type="GO" id="GO:0005739">
    <property type="term" value="C:mitochondrion"/>
    <property type="evidence" value="ECO:0000266"/>
    <property type="project" value="RGD"/>
</dbReference>
<dbReference type="GO" id="GO:0005790">
    <property type="term" value="C:smooth endoplasmic reticulum"/>
    <property type="evidence" value="ECO:0000314"/>
    <property type="project" value="UniProtKB"/>
</dbReference>
<dbReference type="GO" id="GO:0000774">
    <property type="term" value="F:adenyl-nucleotide exchange factor activity"/>
    <property type="evidence" value="ECO:0000318"/>
    <property type="project" value="GO_Central"/>
</dbReference>
<dbReference type="GO" id="GO:0005524">
    <property type="term" value="F:ATP binding"/>
    <property type="evidence" value="ECO:0007669"/>
    <property type="project" value="UniProtKB-KW"/>
</dbReference>
<dbReference type="GO" id="GO:0140662">
    <property type="term" value="F:ATP-dependent protein folding chaperone"/>
    <property type="evidence" value="ECO:0007669"/>
    <property type="project" value="InterPro"/>
</dbReference>
<dbReference type="GO" id="GO:0071456">
    <property type="term" value="P:cellular response to hypoxia"/>
    <property type="evidence" value="ECO:0000266"/>
    <property type="project" value="RGD"/>
</dbReference>
<dbReference type="GO" id="GO:0006888">
    <property type="term" value="P:endoplasmic reticulum to Golgi vesicle-mediated transport"/>
    <property type="evidence" value="ECO:0000266"/>
    <property type="project" value="RGD"/>
</dbReference>
<dbReference type="GO" id="GO:0043066">
    <property type="term" value="P:negative regulation of apoptotic process"/>
    <property type="evidence" value="ECO:0000266"/>
    <property type="project" value="RGD"/>
</dbReference>
<dbReference type="GO" id="GO:1903382">
    <property type="term" value="P:negative regulation of endoplasmic reticulum stress-induced neuron intrinsic apoptotic signaling pathway"/>
    <property type="evidence" value="ECO:0000266"/>
    <property type="project" value="RGD"/>
</dbReference>
<dbReference type="GO" id="GO:1903298">
    <property type="term" value="P:negative regulation of hypoxia-induced intrinsic apoptotic signaling pathway"/>
    <property type="evidence" value="ECO:0000314"/>
    <property type="project" value="ParkinsonsUK-UCL"/>
</dbReference>
<dbReference type="GO" id="GO:0034976">
    <property type="term" value="P:response to endoplasmic reticulum stress"/>
    <property type="evidence" value="ECO:0000266"/>
    <property type="project" value="RGD"/>
</dbReference>
<dbReference type="GO" id="GO:0001666">
    <property type="term" value="P:response to hypoxia"/>
    <property type="evidence" value="ECO:0000314"/>
    <property type="project" value="RGD"/>
</dbReference>
<dbReference type="GO" id="GO:0002931">
    <property type="term" value="P:response to ischemia"/>
    <property type="evidence" value="ECO:0000266"/>
    <property type="project" value="RGD"/>
</dbReference>
<dbReference type="CDD" id="cd10230">
    <property type="entry name" value="ASKHA_NBD_HSP70_HYOU1"/>
    <property type="match status" value="1"/>
</dbReference>
<dbReference type="FunFam" id="1.20.1270.10:FF:000013">
    <property type="entry name" value="Hypoxia up-regulated protein 1"/>
    <property type="match status" value="1"/>
</dbReference>
<dbReference type="FunFam" id="2.60.34.10:FF:000009">
    <property type="entry name" value="Hypoxia up-regulated protein 1"/>
    <property type="match status" value="1"/>
</dbReference>
<dbReference type="FunFam" id="3.90.640.10:FF:000012">
    <property type="entry name" value="Hypoxia up-regulated protein 1"/>
    <property type="match status" value="1"/>
</dbReference>
<dbReference type="FunFam" id="3.30.30.30:FF:000004">
    <property type="entry name" value="hypoxia up-regulated protein 1"/>
    <property type="match status" value="1"/>
</dbReference>
<dbReference type="Gene3D" id="1.20.1270.10">
    <property type="match status" value="1"/>
</dbReference>
<dbReference type="Gene3D" id="3.30.30.30">
    <property type="match status" value="1"/>
</dbReference>
<dbReference type="Gene3D" id="3.30.420.40">
    <property type="match status" value="2"/>
</dbReference>
<dbReference type="Gene3D" id="3.90.640.10">
    <property type="entry name" value="Actin, Chain A, domain 4"/>
    <property type="match status" value="1"/>
</dbReference>
<dbReference type="Gene3D" id="2.60.34.10">
    <property type="entry name" value="Substrate Binding Domain Of DNAk, Chain A, domain 1"/>
    <property type="match status" value="1"/>
</dbReference>
<dbReference type="InterPro" id="IPR043129">
    <property type="entry name" value="ATPase_NBD"/>
</dbReference>
<dbReference type="InterPro" id="IPR018181">
    <property type="entry name" value="Heat_shock_70_CS"/>
</dbReference>
<dbReference type="InterPro" id="IPR029048">
    <property type="entry name" value="HSP70_C_sf"/>
</dbReference>
<dbReference type="InterPro" id="IPR029047">
    <property type="entry name" value="HSP70_peptide-bd_sf"/>
</dbReference>
<dbReference type="InterPro" id="IPR013126">
    <property type="entry name" value="Hsp_70_fam"/>
</dbReference>
<dbReference type="PANTHER" id="PTHR45639">
    <property type="entry name" value="HSC70CB, ISOFORM G-RELATED"/>
    <property type="match status" value="1"/>
</dbReference>
<dbReference type="PANTHER" id="PTHR45639:SF3">
    <property type="entry name" value="HYPOXIA UP-REGULATED PROTEIN 1"/>
    <property type="match status" value="1"/>
</dbReference>
<dbReference type="Pfam" id="PF00012">
    <property type="entry name" value="HSP70"/>
    <property type="match status" value="1"/>
</dbReference>
<dbReference type="PRINTS" id="PR00301">
    <property type="entry name" value="HEATSHOCK70"/>
</dbReference>
<dbReference type="SUPFAM" id="SSF53067">
    <property type="entry name" value="Actin-like ATPase domain"/>
    <property type="match status" value="2"/>
</dbReference>
<dbReference type="SUPFAM" id="SSF100934">
    <property type="entry name" value="Heat shock protein 70kD (HSP70), C-terminal subdomain"/>
    <property type="match status" value="1"/>
</dbReference>
<dbReference type="PROSITE" id="PS00329">
    <property type="entry name" value="HSP70_2"/>
    <property type="match status" value="1"/>
</dbReference>
<dbReference type="PROSITE" id="PS01036">
    <property type="entry name" value="HSP70_3"/>
    <property type="match status" value="1"/>
</dbReference>
<sequence length="999" mass="111289">MAATVRRQRPRRLLCWALVAVLLADLLALSDTLAVMSVDLGSESMKVAIVKPGVPMEIVLNKESRRKTPVTVTLKENERFLGDSAAGMAIKNPKATLRYFQHLLGKQADNPHVALYRSRFPEHELNVDPQRQTVRFQISPQLQFSPEEVLGMVLNYSRSLAEDFAEQPIKDAVITVPAFFNQAERRAVLQAARMAGLKVLQLINDNTATALSYGVFRRKDINSTAQNIMFYDMGSGSTVCTIVTYQTVKTKEAGTQPQLQIRGVGFDRTLGGLEMELRLREHLAKLFNEQRKGQKAKDVRENPRAMAKLLREANRLKTVLSANADHMAQIEGLMDDVDFKAKVTRVEFEELCADLFDRVPGPVQQALQSAEMSLDQIEQVILVGGPTRVPKVQEVLLKPVGKEELGKNINADEAAAMGAVYQAAALSKAFKVKPFVVRDAVIYPILVEFTREVEEEPGLRSLKHNKRVLFSRMGPYPQRKVITFNRYSHDFNFHINYGDLGFLGPEDLRVFGSQNLTTVKLKGVGESFKKYPDYESKGIKAHFNLDESGVLSLDRVESVFETLVEDSPEEESTLTKLGNTISSLFGGGTSSDAKENGTDAVQEEEESPAEGSKDEPAEQGELKEEAEAPMEDTSQPPPSEPKGDAAREGETPDEKESGDKSEAQKPNEKGQAGPEGVPPAPEEEKKQKPARKQKMVEEIGVELAVLDLPDLPEDELAHSVQKLEDLTLRDLEKQEREKAANSLEAFIFETQDKLYQPEYQEVSTEEQREEISGKLSATSTWLEDEGFGATTVMLKDKLAELRKLCQGLFFRVEERRKWPERLSALDNLLNHSSIFLKGARLIPEMDQIFTDVEMTTLEKVINDTWTWKNATLAEQAKLPATEKPVLLSKDIEAKMMALDREVQYLLNKAKFTKPRPRPKDKNGTRTEPPLNASAGDQEEKVIPPTGQTEEAKAILEPDKEGLGTEAADSEPLELGGPGAESEQAEQTAGQKRPLKNDEL</sequence>
<gene>
    <name type="primary">Hyou1</name>
    <name evidence="3" type="synonym">Hsph4</name>
    <name type="synonym">Orp150</name>
</gene>
<protein>
    <recommendedName>
        <fullName>Hypoxia up-regulated protein 1</fullName>
    </recommendedName>
    <alternativeName>
        <fullName>150 kDa oxygen-regulated protein</fullName>
        <shortName>ORP-150</shortName>
    </alternativeName>
</protein>
<reference key="1">
    <citation type="journal article" date="1997" name="Biochem. Biophys. Res. Commun.">
        <title>Cloning and expression of cDNA encoding the human 150 kDa oxygen-regulated protein, ORP150.</title>
        <authorList>
            <person name="Ikeda J."/>
            <person name="Kaneda S."/>
            <person name="Kuwabara K."/>
            <person name="Ogawa S."/>
            <person name="Kobayashi T."/>
            <person name="Matsumoto M."/>
            <person name="Yura T."/>
            <person name="Yanagi H."/>
        </authorList>
    </citation>
    <scope>NUCLEOTIDE SEQUENCE [MRNA]</scope>
    <scope>PROTEIN SEQUENCE OF 33-63</scope>
    <source>
        <tissue>Astrocyte</tissue>
    </source>
</reference>
<reference key="2">
    <citation type="journal article" date="1996" name="J. Biol. Chem.">
        <title>Purification and characterization of a novel stress protein, the 150-kDa oxygen-regulated protein (ORP150), from cultured rat astrocytes and its expression in ischemic mouse brain.</title>
        <authorList>
            <person name="Kuwabara K."/>
            <person name="Matsumoto M."/>
            <person name="Ikeda J."/>
            <person name="Hori O."/>
            <person name="Ogawa S."/>
            <person name="Maeda Y."/>
            <person name="Kitagawa K."/>
            <person name="Imuta N."/>
            <person name="Kinoshita T."/>
            <person name="Stern D.M."/>
            <person name="Yanagi H."/>
            <person name="Kamada T."/>
        </authorList>
    </citation>
    <scope>PROTEIN SEQUENCE OF 33-47</scope>
    <scope>CHARACTERIZATION</scope>
    <source>
        <strain>Sprague-Dawley</strain>
        <tissue>Astrocyte</tissue>
    </source>
</reference>
<reference key="3">
    <citation type="journal article" date="2002" name="Mol. Biol. Cell">
        <title>A subset of chaperones and folding enzymes form multiprotein complexes in endoplasmic reticulum to bind nascent proteins.</title>
        <authorList>
            <person name="Meunier L."/>
            <person name="Usherwood Y.-K."/>
            <person name="Chung K.T."/>
            <person name="Hendershot L.M."/>
        </authorList>
    </citation>
    <scope>COMPONENT OF A CHAPERONE COMPLEX</scope>
</reference>
<reference key="4">
    <citation type="journal article" date="2013" name="J. Proteome Res.">
        <title>Site-specific glycan-peptide analysis for determination of N-glycoproteome heterogeneity.</title>
        <authorList>
            <person name="Parker B.L."/>
            <person name="Thaysen-Andersen M."/>
            <person name="Solis N."/>
            <person name="Scott N.E."/>
            <person name="Larsen M.R."/>
            <person name="Graham M.E."/>
            <person name="Packer N.H."/>
            <person name="Cordwell S.J."/>
        </authorList>
    </citation>
    <scope>GLYCOSYLATION [LARGE SCALE ANALYSIS] AT ASN-515; ASN-830; ASN-862; ASN-869 AND ASN-931</scope>
    <scope>IDENTIFICATION BY MASS SPECTROMETRY [LARGE SCALE ANALYSIS]</scope>
    <source>
        <tissue>Brain</tissue>
    </source>
</reference>
<name>HYOU1_RAT</name>
<proteinExistence type="evidence at protein level"/>
<evidence type="ECO:0000250" key="1"/>
<evidence type="ECO:0000250" key="2">
    <source>
        <dbReference type="UniProtKB" id="Q9JKR6"/>
    </source>
</evidence>
<evidence type="ECO:0000250" key="3">
    <source>
        <dbReference type="UniProtKB" id="Q9Y4L1"/>
    </source>
</evidence>
<evidence type="ECO:0000255" key="4"/>
<evidence type="ECO:0000256" key="5">
    <source>
        <dbReference type="SAM" id="MobiDB-lite"/>
    </source>
</evidence>
<evidence type="ECO:0000269" key="6">
    <source>
    </source>
</evidence>
<evidence type="ECO:0000269" key="7">
    <source>
    </source>
</evidence>
<evidence type="ECO:0000305" key="8"/>
<evidence type="ECO:0007744" key="9">
    <source>
    </source>
</evidence>